<feature type="signal peptide" evidence="1">
    <location>
        <begin position="1"/>
        <end position="20"/>
    </location>
</feature>
<feature type="chain" id="PRO_0000018785" description="Beta-2-microglobulin">
    <location>
        <begin position="21"/>
        <end position="119"/>
    </location>
</feature>
<feature type="domain" description="Ig-like C1-type">
    <location>
        <begin position="25"/>
        <end position="113"/>
    </location>
</feature>
<feature type="disulfide bond" evidence="3">
    <location>
        <begin position="45"/>
        <end position="100"/>
    </location>
</feature>
<evidence type="ECO:0000250" key="1"/>
<evidence type="ECO:0000250" key="2">
    <source>
        <dbReference type="UniProtKB" id="P61769"/>
    </source>
</evidence>
<evidence type="ECO:0000255" key="3">
    <source>
        <dbReference type="PROSITE-ProRule" id="PRU00114"/>
    </source>
</evidence>
<evidence type="ECO:0000305" key="4"/>
<proteinExistence type="inferred from homology"/>
<name>B2MG_PANTR</name>
<gene>
    <name type="primary">B2M</name>
</gene>
<comment type="function">
    <text evidence="1">Component of the class I major histocompatibility complex (MHC). Involved in the presentation of peptide antigens to the immune system (By similarity).</text>
</comment>
<comment type="subunit">
    <text evidence="2">Heterodimer of an alpha chain and a beta chain. Beta-2-microglobulin is the beta-chain of major histocompatibility complex class I molecules. Forms a heterotrimer with MR1 and a metabolite antigen.</text>
</comment>
<comment type="subcellular location">
    <subcellularLocation>
        <location evidence="1">Secreted</location>
    </subcellularLocation>
</comment>
<comment type="similarity">
    <text evidence="4">Belongs to the beta-2-microglobulin family.</text>
</comment>
<reference key="1">
    <citation type="journal article" date="1990" name="Immunol. Rev.">
        <title>Comparison of class I MHC alleles in humans and apes.</title>
        <authorList>
            <person name="Lawlor D.A."/>
            <person name="Warren E."/>
            <person name="Ward F.E."/>
            <person name="Parham P."/>
        </authorList>
    </citation>
    <scope>NUCLEOTIDE SEQUENCE [MRNA]</scope>
</reference>
<keyword id="KW-1015">Disulfide bond</keyword>
<keyword id="KW-0391">Immunity</keyword>
<keyword id="KW-0393">Immunoglobulin domain</keyword>
<keyword id="KW-0490">MHC I</keyword>
<keyword id="KW-1185">Reference proteome</keyword>
<keyword id="KW-0964">Secreted</keyword>
<keyword id="KW-0732">Signal</keyword>
<sequence>MSRSVALAVLALLSLSGLEAIQRTPKIQVYSRHPAENGKSNFLNCYVSGFHPSDIEVDLLKNGERIEKVEHSDLSFSKDWSFYLLYYTEFTPTEKDEYACRVNHVTLSQPKIVKWDRDM</sequence>
<dbReference type="EMBL" id="M30683">
    <property type="protein sequence ID" value="AAA87972.1"/>
    <property type="molecule type" value="mRNA"/>
</dbReference>
<dbReference type="PIR" id="I36963">
    <property type="entry name" value="I36963"/>
</dbReference>
<dbReference type="RefSeq" id="NP_001009066.1">
    <property type="nucleotide sequence ID" value="NM_001009066.2"/>
</dbReference>
<dbReference type="BMRB" id="P61770"/>
<dbReference type="SMR" id="P61770"/>
<dbReference type="FunCoup" id="P61770">
    <property type="interactions" value="582"/>
</dbReference>
<dbReference type="STRING" id="9598.ENSPTRP00000011997"/>
<dbReference type="PaxDb" id="9598-ENSPTRP00000011997"/>
<dbReference type="GeneID" id="450170"/>
<dbReference type="KEGG" id="ptr:450170"/>
<dbReference type="CTD" id="567"/>
<dbReference type="eggNOG" id="ENOG502S8GM">
    <property type="taxonomic scope" value="Eukaryota"/>
</dbReference>
<dbReference type="HOGENOM" id="CLU_163066_0_0_1"/>
<dbReference type="InParanoid" id="P61770"/>
<dbReference type="TreeFam" id="TF334167"/>
<dbReference type="Proteomes" id="UP000002277">
    <property type="component" value="Unplaced"/>
</dbReference>
<dbReference type="GO" id="GO:0005576">
    <property type="term" value="C:extracellular region"/>
    <property type="evidence" value="ECO:0007669"/>
    <property type="project" value="UniProtKB-SubCell"/>
</dbReference>
<dbReference type="GO" id="GO:0031902">
    <property type="term" value="C:late endosome membrane"/>
    <property type="evidence" value="ECO:0000318"/>
    <property type="project" value="GO_Central"/>
</dbReference>
<dbReference type="GO" id="GO:0005765">
    <property type="term" value="C:lysosomal membrane"/>
    <property type="evidence" value="ECO:0000318"/>
    <property type="project" value="GO_Central"/>
</dbReference>
<dbReference type="GO" id="GO:0042612">
    <property type="term" value="C:MHC class I protein complex"/>
    <property type="evidence" value="ECO:0007669"/>
    <property type="project" value="UniProtKB-KW"/>
</dbReference>
<dbReference type="GO" id="GO:0042613">
    <property type="term" value="C:MHC class II protein complex"/>
    <property type="evidence" value="ECO:0000318"/>
    <property type="project" value="GO_Central"/>
</dbReference>
<dbReference type="GO" id="GO:0023026">
    <property type="term" value="F:MHC class II protein complex binding"/>
    <property type="evidence" value="ECO:0000318"/>
    <property type="project" value="GO_Central"/>
</dbReference>
<dbReference type="GO" id="GO:0042605">
    <property type="term" value="F:peptide antigen binding"/>
    <property type="evidence" value="ECO:0000318"/>
    <property type="project" value="GO_Central"/>
</dbReference>
<dbReference type="GO" id="GO:0019886">
    <property type="term" value="P:antigen processing and presentation of exogenous peptide antigen via MHC class II"/>
    <property type="evidence" value="ECO:0000318"/>
    <property type="project" value="GO_Central"/>
</dbReference>
<dbReference type="GO" id="GO:0002474">
    <property type="term" value="P:antigen processing and presentation of peptide antigen via MHC class I"/>
    <property type="evidence" value="ECO:0007669"/>
    <property type="project" value="UniProtKB-KW"/>
</dbReference>
<dbReference type="GO" id="GO:0006955">
    <property type="term" value="P:immune response"/>
    <property type="evidence" value="ECO:0007669"/>
    <property type="project" value="InterPro"/>
</dbReference>
<dbReference type="GO" id="GO:0002503">
    <property type="term" value="P:peptide antigen assembly with MHC class II protein complex"/>
    <property type="evidence" value="ECO:0000318"/>
    <property type="project" value="GO_Central"/>
</dbReference>
<dbReference type="GO" id="GO:0050778">
    <property type="term" value="P:positive regulation of immune response"/>
    <property type="evidence" value="ECO:0000318"/>
    <property type="project" value="GO_Central"/>
</dbReference>
<dbReference type="GO" id="GO:0050870">
    <property type="term" value="P:positive regulation of T cell activation"/>
    <property type="evidence" value="ECO:0000318"/>
    <property type="project" value="GO_Central"/>
</dbReference>
<dbReference type="CDD" id="cd05770">
    <property type="entry name" value="IgC1_beta2m"/>
    <property type="match status" value="1"/>
</dbReference>
<dbReference type="FunFam" id="2.60.40.10:FF:001005">
    <property type="entry name" value="Beta-2-microglobulin"/>
    <property type="match status" value="1"/>
</dbReference>
<dbReference type="Gene3D" id="2.60.40.10">
    <property type="entry name" value="Immunoglobulins"/>
    <property type="match status" value="1"/>
</dbReference>
<dbReference type="InterPro" id="IPR015707">
    <property type="entry name" value="B2Microglobulin"/>
</dbReference>
<dbReference type="InterPro" id="IPR007110">
    <property type="entry name" value="Ig-like_dom"/>
</dbReference>
<dbReference type="InterPro" id="IPR036179">
    <property type="entry name" value="Ig-like_dom_sf"/>
</dbReference>
<dbReference type="InterPro" id="IPR013783">
    <property type="entry name" value="Ig-like_fold"/>
</dbReference>
<dbReference type="InterPro" id="IPR003006">
    <property type="entry name" value="Ig/MHC_CS"/>
</dbReference>
<dbReference type="InterPro" id="IPR003597">
    <property type="entry name" value="Ig_C1-set"/>
</dbReference>
<dbReference type="InterPro" id="IPR050160">
    <property type="entry name" value="MHC/Immunoglobulin"/>
</dbReference>
<dbReference type="PANTHER" id="PTHR19944:SF62">
    <property type="entry name" value="BETA-2-MICROGLOBULIN"/>
    <property type="match status" value="1"/>
</dbReference>
<dbReference type="PANTHER" id="PTHR19944">
    <property type="entry name" value="MHC CLASS II-RELATED"/>
    <property type="match status" value="1"/>
</dbReference>
<dbReference type="Pfam" id="PF07654">
    <property type="entry name" value="C1-set"/>
    <property type="match status" value="1"/>
</dbReference>
<dbReference type="SMART" id="SM00407">
    <property type="entry name" value="IGc1"/>
    <property type="match status" value="1"/>
</dbReference>
<dbReference type="SUPFAM" id="SSF48726">
    <property type="entry name" value="Immunoglobulin"/>
    <property type="match status" value="1"/>
</dbReference>
<dbReference type="PROSITE" id="PS50835">
    <property type="entry name" value="IG_LIKE"/>
    <property type="match status" value="1"/>
</dbReference>
<dbReference type="PROSITE" id="PS00290">
    <property type="entry name" value="IG_MHC"/>
    <property type="match status" value="1"/>
</dbReference>
<protein>
    <recommendedName>
        <fullName>Beta-2-microglobulin</fullName>
    </recommendedName>
</protein>
<accession>P61770</accession>
<accession>P01884</accession>
<accession>Q9UDF4</accession>
<organism>
    <name type="scientific">Pan troglodytes</name>
    <name type="common">Chimpanzee</name>
    <dbReference type="NCBI Taxonomy" id="9598"/>
    <lineage>
        <taxon>Eukaryota</taxon>
        <taxon>Metazoa</taxon>
        <taxon>Chordata</taxon>
        <taxon>Craniata</taxon>
        <taxon>Vertebrata</taxon>
        <taxon>Euteleostomi</taxon>
        <taxon>Mammalia</taxon>
        <taxon>Eutheria</taxon>
        <taxon>Euarchontoglires</taxon>
        <taxon>Primates</taxon>
        <taxon>Haplorrhini</taxon>
        <taxon>Catarrhini</taxon>
        <taxon>Hominidae</taxon>
        <taxon>Pan</taxon>
    </lineage>
</organism>